<dbReference type="EMBL" id="S87916">
    <property type="protein sequence ID" value="AAA08055.1"/>
    <property type="molecule type" value="mRNA"/>
</dbReference>
<dbReference type="EMBL" id="S87918">
    <property type="protein sequence ID" value="ABB76284.1"/>
    <property type="molecule type" value="mRNA"/>
</dbReference>
<dbReference type="EMBL" id="X63422">
    <property type="protein sequence ID" value="CAA45016.1"/>
    <property type="molecule type" value="mRNA"/>
</dbReference>
<dbReference type="EMBL" id="X63423">
    <property type="protein sequence ID" value="CAA45017.1"/>
    <property type="molecule type" value="mRNA"/>
</dbReference>
<dbReference type="EMBL" id="CR542218">
    <property type="protein sequence ID" value="CAG47014.1"/>
    <property type="molecule type" value="mRNA"/>
</dbReference>
<dbReference type="EMBL" id="AC004221">
    <property type="protein sequence ID" value="AAC04304.1"/>
    <property type="molecule type" value="Genomic_DNA"/>
</dbReference>
<dbReference type="EMBL" id="CH471139">
    <property type="protein sequence ID" value="EAW69532.1"/>
    <property type="molecule type" value="Genomic_DNA"/>
</dbReference>
<dbReference type="EMBL" id="CH471139">
    <property type="protein sequence ID" value="EAW69533.1"/>
    <property type="molecule type" value="Genomic_DNA"/>
</dbReference>
<dbReference type="EMBL" id="CH471139">
    <property type="protein sequence ID" value="EAW69534.1"/>
    <property type="molecule type" value="Genomic_DNA"/>
</dbReference>
<dbReference type="EMBL" id="BC002389">
    <property type="protein sequence ID" value="AAH02389.1"/>
    <property type="molecule type" value="mRNA"/>
</dbReference>
<dbReference type="EMBL" id="BC004426">
    <property type="protein sequence ID" value="AAH04426.1"/>
    <property type="molecule type" value="mRNA"/>
</dbReference>
<dbReference type="EMBL" id="BC018079">
    <property type="protein sequence ID" value="AAH18079.1"/>
    <property type="molecule type" value="mRNA"/>
</dbReference>
<dbReference type="CCDS" id="CCDS12058.1"/>
<dbReference type="PIR" id="S22348">
    <property type="entry name" value="S22348"/>
</dbReference>
<dbReference type="RefSeq" id="NP_001001975.1">
    <property type="nucleotide sequence ID" value="NM_001001975.2"/>
</dbReference>
<dbReference type="RefSeq" id="NP_001678.1">
    <property type="nucleotide sequence ID" value="NM_001687.5"/>
</dbReference>
<dbReference type="PDB" id="8H9F">
    <property type="method" value="EM"/>
    <property type="resolution" value="2.69 A"/>
    <property type="chains" value="H=23-168"/>
</dbReference>
<dbReference type="PDB" id="8H9J">
    <property type="method" value="EM"/>
    <property type="resolution" value="3.26 A"/>
    <property type="chains" value="H=23-168"/>
</dbReference>
<dbReference type="PDB" id="8H9M">
    <property type="method" value="EM"/>
    <property type="resolution" value="3.00 A"/>
    <property type="chains" value="H=23-168"/>
</dbReference>
<dbReference type="PDB" id="8H9Q">
    <property type="method" value="EM"/>
    <property type="resolution" value="3.47 A"/>
    <property type="chains" value="H=23-168"/>
</dbReference>
<dbReference type="PDB" id="8H9S">
    <property type="method" value="EM"/>
    <property type="resolution" value="2.53 A"/>
    <property type="chains" value="H=23-168"/>
</dbReference>
<dbReference type="PDB" id="8H9T">
    <property type="method" value="EM"/>
    <property type="resolution" value="2.77 A"/>
    <property type="chains" value="H=23-168"/>
</dbReference>
<dbReference type="PDB" id="8H9U">
    <property type="method" value="EM"/>
    <property type="resolution" value="2.61 A"/>
    <property type="chains" value="H=23-168"/>
</dbReference>
<dbReference type="PDB" id="8H9V">
    <property type="method" value="EM"/>
    <property type="resolution" value="3.02 A"/>
    <property type="chains" value="H=23-168"/>
</dbReference>
<dbReference type="PDB" id="8KHF">
    <property type="method" value="EM"/>
    <property type="resolution" value="3.13 A"/>
    <property type="chains" value="H=23-168"/>
</dbReference>
<dbReference type="PDB" id="8KI3">
    <property type="method" value="EM"/>
    <property type="resolution" value="2.89 A"/>
    <property type="chains" value="H=23-168"/>
</dbReference>
<dbReference type="PDBsum" id="8H9F"/>
<dbReference type="PDBsum" id="8H9J"/>
<dbReference type="PDBsum" id="8H9M"/>
<dbReference type="PDBsum" id="8H9Q"/>
<dbReference type="PDBsum" id="8H9S"/>
<dbReference type="PDBsum" id="8H9T"/>
<dbReference type="PDBsum" id="8H9U"/>
<dbReference type="PDBsum" id="8H9V"/>
<dbReference type="PDBsum" id="8KHF"/>
<dbReference type="PDBsum" id="8KI3"/>
<dbReference type="EMDB" id="EMD-34565"/>
<dbReference type="EMDB" id="EMD-34569"/>
<dbReference type="EMDB" id="EMD-34573"/>
<dbReference type="EMDB" id="EMD-34577"/>
<dbReference type="EMDB" id="EMD-34580"/>
<dbReference type="EMDB" id="EMD-34581"/>
<dbReference type="EMDB" id="EMD-34582"/>
<dbReference type="EMDB" id="EMD-34583"/>
<dbReference type="EMDB" id="EMD-37243"/>
<dbReference type="EMDB" id="EMD-37251"/>
<dbReference type="SMR" id="P30049"/>
<dbReference type="BioGRID" id="106998">
    <property type="interactions" value="153"/>
</dbReference>
<dbReference type="ComplexPortal" id="CPX-6151">
    <property type="entry name" value="Mitochondrial proton-transporting ATP synthase complex"/>
</dbReference>
<dbReference type="CORUM" id="P30049"/>
<dbReference type="FunCoup" id="P30049">
    <property type="interactions" value="1888"/>
</dbReference>
<dbReference type="IntAct" id="P30049">
    <property type="interactions" value="84"/>
</dbReference>
<dbReference type="MINT" id="P30049"/>
<dbReference type="STRING" id="9606.ENSP00000215375"/>
<dbReference type="DrugBank" id="DB01189">
    <property type="generic name" value="Desflurane"/>
</dbReference>
<dbReference type="DrugBank" id="DB01119">
    <property type="generic name" value="Diazoxide"/>
</dbReference>
<dbReference type="DrugBank" id="DB00753">
    <property type="generic name" value="Isoflurane"/>
</dbReference>
<dbReference type="DrugBank" id="DB13749">
    <property type="generic name" value="Magnesium gluconate"/>
</dbReference>
<dbReference type="TCDB" id="3.A.2.1.15">
    <property type="family name" value="the h+- or na+-translocating f-type, v-type and a-type atpase (f-atpase) superfamily"/>
</dbReference>
<dbReference type="GlyGen" id="P30049">
    <property type="glycosylation" value="1 site, 1 O-linked glycan (1 site)"/>
</dbReference>
<dbReference type="iPTMnet" id="P30049"/>
<dbReference type="PhosphoSitePlus" id="P30049"/>
<dbReference type="BioMuta" id="ATP5D"/>
<dbReference type="DMDM" id="584812"/>
<dbReference type="OGP" id="P30049"/>
<dbReference type="jPOST" id="P30049"/>
<dbReference type="MassIVE" id="P30049"/>
<dbReference type="PaxDb" id="9606-ENSP00000215375"/>
<dbReference type="PeptideAtlas" id="P30049"/>
<dbReference type="ProteomicsDB" id="54629"/>
<dbReference type="Pumba" id="P30049"/>
<dbReference type="TopDownProteomics" id="P30049"/>
<dbReference type="Antibodypedia" id="1258">
    <property type="antibodies" value="307 antibodies from 30 providers"/>
</dbReference>
<dbReference type="DNASU" id="513"/>
<dbReference type="Ensembl" id="ENST00000215375.7">
    <property type="protein sequence ID" value="ENSP00000215375.1"/>
    <property type="gene ID" value="ENSG00000099624.8"/>
</dbReference>
<dbReference type="Ensembl" id="ENST00000395633.5">
    <property type="protein sequence ID" value="ENSP00000378995.1"/>
    <property type="gene ID" value="ENSG00000099624.8"/>
</dbReference>
<dbReference type="Ensembl" id="ENST00000591660.5">
    <property type="protein sequence ID" value="ENSP00000464863.1"/>
    <property type="gene ID" value="ENSG00000099624.8"/>
</dbReference>
<dbReference type="GeneID" id="513"/>
<dbReference type="KEGG" id="hsa:513"/>
<dbReference type="MANE-Select" id="ENST00000215375.7">
    <property type="protein sequence ID" value="ENSP00000215375.1"/>
    <property type="RefSeq nucleotide sequence ID" value="NM_001687.5"/>
    <property type="RefSeq protein sequence ID" value="NP_001678.1"/>
</dbReference>
<dbReference type="UCSC" id="uc002lrn.4">
    <property type="organism name" value="human"/>
</dbReference>
<dbReference type="AGR" id="HGNC:837"/>
<dbReference type="CTD" id="513"/>
<dbReference type="DisGeNET" id="513"/>
<dbReference type="GeneCards" id="ATP5F1D"/>
<dbReference type="HGNC" id="HGNC:837">
    <property type="gene designation" value="ATP5F1D"/>
</dbReference>
<dbReference type="HPA" id="ENSG00000099624">
    <property type="expression patterns" value="Tissue enhanced (skeletal)"/>
</dbReference>
<dbReference type="MalaCards" id="ATP5F1D"/>
<dbReference type="MIM" id="603150">
    <property type="type" value="gene"/>
</dbReference>
<dbReference type="MIM" id="618120">
    <property type="type" value="phenotype"/>
</dbReference>
<dbReference type="neXtProt" id="NX_P30049"/>
<dbReference type="OpenTargets" id="ENSG00000099624"/>
<dbReference type="Orphanet" id="254913">
    <property type="disease" value="Isolated ATP synthase deficiency"/>
</dbReference>
<dbReference type="PharmGKB" id="PA25127"/>
<dbReference type="VEuPathDB" id="HostDB:ENSG00000099624"/>
<dbReference type="eggNOG" id="KOG1758">
    <property type="taxonomic scope" value="Eukaryota"/>
</dbReference>
<dbReference type="GeneTree" id="ENSGT00390000017576"/>
<dbReference type="HOGENOM" id="CLU_084338_0_1_1"/>
<dbReference type="InParanoid" id="P30049"/>
<dbReference type="OMA" id="PHQTIYR"/>
<dbReference type="OrthoDB" id="270171at2759"/>
<dbReference type="PAN-GO" id="P30049">
    <property type="GO annotations" value="2 GO annotations based on evolutionary models"/>
</dbReference>
<dbReference type="PhylomeDB" id="P30049"/>
<dbReference type="TreeFam" id="TF313029"/>
<dbReference type="BioCyc" id="MetaCyc:HS01900-MONOMER"/>
<dbReference type="PathwayCommons" id="P30049"/>
<dbReference type="Reactome" id="R-HSA-163210">
    <property type="pathway name" value="Formation of ATP by chemiosmotic coupling"/>
</dbReference>
<dbReference type="Reactome" id="R-HSA-8949613">
    <property type="pathway name" value="Cristae formation"/>
</dbReference>
<dbReference type="SignaLink" id="P30049"/>
<dbReference type="SIGNOR" id="P30049"/>
<dbReference type="BioGRID-ORCS" id="513">
    <property type="hits" value="662 hits in 1152 CRISPR screens"/>
</dbReference>
<dbReference type="CD-CODE" id="FB4E32DD">
    <property type="entry name" value="Presynaptic clusters and postsynaptic densities"/>
</dbReference>
<dbReference type="ChiTaRS" id="ATP5D">
    <property type="organism name" value="human"/>
</dbReference>
<dbReference type="GeneWiki" id="ATP5D"/>
<dbReference type="GenomeRNAi" id="513"/>
<dbReference type="Pharos" id="P30049">
    <property type="development level" value="Tbio"/>
</dbReference>
<dbReference type="PRO" id="PR:P30049"/>
<dbReference type="Proteomes" id="UP000005640">
    <property type="component" value="Chromosome 19"/>
</dbReference>
<dbReference type="RNAct" id="P30049">
    <property type="molecule type" value="protein"/>
</dbReference>
<dbReference type="Bgee" id="ENSG00000099624">
    <property type="expression patterns" value="Expressed in apex of heart and 203 other cell types or tissues"/>
</dbReference>
<dbReference type="ExpressionAtlas" id="P30049">
    <property type="expression patterns" value="baseline and differential"/>
</dbReference>
<dbReference type="GO" id="GO:0005743">
    <property type="term" value="C:mitochondrial inner membrane"/>
    <property type="evidence" value="ECO:0000250"/>
    <property type="project" value="UniProtKB"/>
</dbReference>
<dbReference type="GO" id="GO:0005759">
    <property type="term" value="C:mitochondrial matrix"/>
    <property type="evidence" value="ECO:0000304"/>
    <property type="project" value="Reactome"/>
</dbReference>
<dbReference type="GO" id="GO:0005739">
    <property type="term" value="C:mitochondrion"/>
    <property type="evidence" value="ECO:0000314"/>
    <property type="project" value="HPA"/>
</dbReference>
<dbReference type="GO" id="GO:0045259">
    <property type="term" value="C:proton-transporting ATP synthase complex"/>
    <property type="evidence" value="ECO:0000314"/>
    <property type="project" value="UniProtKB"/>
</dbReference>
<dbReference type="GO" id="GO:0046933">
    <property type="term" value="F:proton-transporting ATP synthase activity, rotational mechanism"/>
    <property type="evidence" value="ECO:0007669"/>
    <property type="project" value="InterPro"/>
</dbReference>
<dbReference type="GO" id="GO:0005198">
    <property type="term" value="F:structural molecule activity"/>
    <property type="evidence" value="ECO:0000314"/>
    <property type="project" value="UniProtKB"/>
</dbReference>
<dbReference type="GO" id="GO:0009060">
    <property type="term" value="P:aerobic respiration"/>
    <property type="evidence" value="ECO:0000315"/>
    <property type="project" value="UniProtKB"/>
</dbReference>
<dbReference type="GO" id="GO:0033615">
    <property type="term" value="P:mitochondrial proton-transporting ATP synthase complex assembly"/>
    <property type="evidence" value="ECO:0000314"/>
    <property type="project" value="UniProtKB"/>
</dbReference>
<dbReference type="GO" id="GO:0015986">
    <property type="term" value="P:proton motive force-driven ATP synthesis"/>
    <property type="evidence" value="ECO:0000318"/>
    <property type="project" value="GO_Central"/>
</dbReference>
<dbReference type="GO" id="GO:0042776">
    <property type="term" value="P:proton motive force-driven mitochondrial ATP synthesis"/>
    <property type="evidence" value="ECO:0000314"/>
    <property type="project" value="UniProtKB"/>
</dbReference>
<dbReference type="GO" id="GO:0046688">
    <property type="term" value="P:response to copper ion"/>
    <property type="evidence" value="ECO:0000303"/>
    <property type="project" value="UniProtKB"/>
</dbReference>
<dbReference type="CDD" id="cd12152">
    <property type="entry name" value="F1-ATPase_delta"/>
    <property type="match status" value="1"/>
</dbReference>
<dbReference type="FunFam" id="1.20.5.440:FF:000002">
    <property type="entry name" value="ATP synthase subunit delta, mitochondrial"/>
    <property type="match status" value="1"/>
</dbReference>
<dbReference type="FunFam" id="2.60.15.10:FF:000004">
    <property type="entry name" value="ATP synthase subunit delta, mitochondrial"/>
    <property type="match status" value="1"/>
</dbReference>
<dbReference type="Gene3D" id="1.20.5.440">
    <property type="entry name" value="ATP synthase delta/epsilon subunit, C-terminal domain"/>
    <property type="match status" value="1"/>
</dbReference>
<dbReference type="Gene3D" id="2.60.15.10">
    <property type="entry name" value="F0F1 ATP synthase delta/epsilon subunit, N-terminal"/>
    <property type="match status" value="1"/>
</dbReference>
<dbReference type="HAMAP" id="MF_00530">
    <property type="entry name" value="ATP_synth_epsil_bac"/>
    <property type="match status" value="1"/>
</dbReference>
<dbReference type="InterPro" id="IPR036794">
    <property type="entry name" value="ATP_F1_dsu/esu_C_sf"/>
</dbReference>
<dbReference type="InterPro" id="IPR001469">
    <property type="entry name" value="ATP_synth_F1_dsu/esu"/>
</dbReference>
<dbReference type="InterPro" id="IPR020546">
    <property type="entry name" value="ATP_synth_F1_dsu/esu_N"/>
</dbReference>
<dbReference type="InterPro" id="IPR048937">
    <property type="entry name" value="ATPD_C_metazoa"/>
</dbReference>
<dbReference type="InterPro" id="IPR036771">
    <property type="entry name" value="ATPsynth_dsu/esu_N"/>
</dbReference>
<dbReference type="NCBIfam" id="TIGR01216">
    <property type="entry name" value="ATP_synt_epsi"/>
    <property type="match status" value="1"/>
</dbReference>
<dbReference type="PANTHER" id="PTHR13822">
    <property type="entry name" value="ATP SYNTHASE DELTA/EPSILON CHAIN"/>
    <property type="match status" value="1"/>
</dbReference>
<dbReference type="PANTHER" id="PTHR13822:SF7">
    <property type="entry name" value="ATP SYNTHASE SUBUNIT DELTA, MITOCHONDRIAL"/>
    <property type="match status" value="1"/>
</dbReference>
<dbReference type="Pfam" id="PF02823">
    <property type="entry name" value="ATP-synt_DE_N"/>
    <property type="match status" value="1"/>
</dbReference>
<dbReference type="Pfam" id="PF21335">
    <property type="entry name" value="ATPD_C_metazoa"/>
    <property type="match status" value="1"/>
</dbReference>
<dbReference type="SUPFAM" id="SSF46604">
    <property type="entry name" value="Epsilon subunit of F1F0-ATP synthase C-terminal domain"/>
    <property type="match status" value="1"/>
</dbReference>
<dbReference type="SUPFAM" id="SSF51344">
    <property type="entry name" value="Epsilon subunit of F1F0-ATP synthase N-terminal domain"/>
    <property type="match status" value="1"/>
</dbReference>
<evidence type="ECO:0000250" key="1">
    <source>
        <dbReference type="UniProtKB" id="P05630"/>
    </source>
</evidence>
<evidence type="ECO:0000250" key="2">
    <source>
        <dbReference type="UniProtKB" id="P19483"/>
    </source>
</evidence>
<evidence type="ECO:0000250" key="3">
    <source>
        <dbReference type="UniProtKB" id="Q9D3D9"/>
    </source>
</evidence>
<evidence type="ECO:0000269" key="4">
    <source>
    </source>
</evidence>
<evidence type="ECO:0000269" key="5">
    <source>
    </source>
</evidence>
<evidence type="ECO:0000269" key="6">
    <source>
    </source>
</evidence>
<evidence type="ECO:0000269" key="7">
    <source>
    </source>
</evidence>
<evidence type="ECO:0000305" key="8"/>
<evidence type="ECO:0000305" key="9">
    <source>
    </source>
</evidence>
<evidence type="ECO:0000305" key="10">
    <source>
    </source>
</evidence>
<evidence type="ECO:0000312" key="11">
    <source>
        <dbReference type="HGNC" id="HGNC:837"/>
    </source>
</evidence>
<evidence type="ECO:0007744" key="12">
    <source>
        <dbReference type="PDB" id="8H9F"/>
    </source>
</evidence>
<evidence type="ECO:0007744" key="13">
    <source>
        <dbReference type="PDB" id="8H9J"/>
    </source>
</evidence>
<evidence type="ECO:0007744" key="14">
    <source>
        <dbReference type="PDB" id="8H9M"/>
    </source>
</evidence>
<evidence type="ECO:0007744" key="15">
    <source>
        <dbReference type="PDB" id="8H9Q"/>
    </source>
</evidence>
<evidence type="ECO:0007744" key="16">
    <source>
        <dbReference type="PDB" id="8H9S"/>
    </source>
</evidence>
<evidence type="ECO:0007744" key="17">
    <source>
        <dbReference type="PDB" id="8H9T"/>
    </source>
</evidence>
<evidence type="ECO:0007744" key="18">
    <source>
        <dbReference type="PDB" id="8H9U"/>
    </source>
</evidence>
<evidence type="ECO:0007744" key="19">
    <source>
        <dbReference type="PDB" id="8H9V"/>
    </source>
</evidence>
<evidence type="ECO:0007829" key="20">
    <source>
        <dbReference type="PDB" id="8H9M"/>
    </source>
</evidence>
<evidence type="ECO:0007829" key="21">
    <source>
        <dbReference type="PDB" id="8H9V"/>
    </source>
</evidence>
<sequence>MLPAALLRRPGLGRLVRHARAYAEAAAAPAAASGPNQMSFTFASPTQVFFNGANVRQVDVPTLTGAFGILAAHVPTLQVLRPGLVVVHAEDGTTSKYFVSSGSIAVNADSSVQLLAEEAVTLDMLDLGAAKANLEKAQAELVGTADEATRAEIQIRIEANEALVKALE</sequence>
<protein>
    <recommendedName>
        <fullName evidence="8">ATP synthase F(1) complex subunit delta, mitochondrial</fullName>
    </recommendedName>
    <alternativeName>
        <fullName evidence="11">ATP synthase F1 subunit delta</fullName>
    </alternativeName>
    <alternativeName>
        <fullName>F-ATPase delta subunit</fullName>
    </alternativeName>
</protein>
<organism>
    <name type="scientific">Homo sapiens</name>
    <name type="common">Human</name>
    <dbReference type="NCBI Taxonomy" id="9606"/>
    <lineage>
        <taxon>Eukaryota</taxon>
        <taxon>Metazoa</taxon>
        <taxon>Chordata</taxon>
        <taxon>Craniata</taxon>
        <taxon>Vertebrata</taxon>
        <taxon>Euteleostomi</taxon>
        <taxon>Mammalia</taxon>
        <taxon>Eutheria</taxon>
        <taxon>Euarchontoglires</taxon>
        <taxon>Primates</taxon>
        <taxon>Haplorrhini</taxon>
        <taxon>Catarrhini</taxon>
        <taxon>Hominidae</taxon>
        <taxon>Homo</taxon>
    </lineage>
</organism>
<gene>
    <name evidence="11" type="primary">ATP5F1D</name>
    <name evidence="11" type="synonym">ATP5D</name>
</gene>
<keyword id="KW-0002">3D-structure</keyword>
<keyword id="KW-0007">Acetylation</keyword>
<keyword id="KW-0066">ATP synthesis</keyword>
<keyword id="KW-0139">CF(1)</keyword>
<keyword id="KW-0903">Direct protein sequencing</keyword>
<keyword id="KW-0225">Disease variant</keyword>
<keyword id="KW-0375">Hydrogen ion transport</keyword>
<keyword id="KW-0406">Ion transport</keyword>
<keyword id="KW-0472">Membrane</keyword>
<keyword id="KW-0496">Mitochondrion</keyword>
<keyword id="KW-0999">Mitochondrion inner membrane</keyword>
<keyword id="KW-1274">Primary mitochondrial disease</keyword>
<keyword id="KW-1267">Proteomics identification</keyword>
<keyword id="KW-1185">Reference proteome</keyword>
<keyword id="KW-0809">Transit peptide</keyword>
<keyword id="KW-0813">Transport</keyword>
<comment type="function">
    <text evidence="2 6 7 9 10">Subunit delta, of the mitochondrial membrane ATP synthase complex (F(1)F(0) ATP synthase or Complex V) that produces ATP from ADP in the presence of a proton gradient across the membrane which is generated by electron transport complexes of the respiratory chain (Probable) (PubMed:37244256). ATP synthase complex consist of a soluble F(1) head domain - the catalytic core - and a membrane F(1) domain - the membrane proton channel (PubMed:37244256). These two domains are linked by a central stalk rotating inside the F(1) region and a stationary peripheral stalk (PubMed:37244256). During catalysis, ATP synthesis in the catalytic domain of F(1) is coupled via a rotary mechanism of the central stalk subunits to proton translocation (Probable). In vivo, can only synthesize ATP although its ATP hydrolase activity can be activated artificially in vitro (By similarity). With the central stalk subunit gamma, is essential for the biogenesis of F(1) catalytic part of the ATP synthase complex namely in the formation of F1 assembly intermediate (PubMed:29499186).</text>
</comment>
<comment type="subunit">
    <text evidence="1 7">Component of the ATP synthase complex composed at least of ATP5F1A/subunit alpha, ATP5F1B/subunit beta, ATP5MC1/subunit c (homooctomer), MT-ATP6/subunit a, MT-ATP8/subunit 8, ATP5ME/subunit e, ATP5MF/subunit f, ATP5MG/subunit g, ATP5MK/subunit k, ATP5MJ/subunit j, ATP5F1C/subunit gamma, ATP5F1D/subunit delta, ATP5F1E/subunit epsilon, ATP5PF/subunit F6, ATP5PB/subunit b, ATP5PD/subunit d, ATP5PO/subunit OSCP (PubMed:37244256). ATP synthase complex consists of a soluble F(1) head domain (subunits alpha(3) and beta(3)) - the catalytic core - and a membrane F(0) domain - the membrane proton channel (subunits c, a, 8, e, f, g, k and j) (PubMed:37244256). These two domains are linked by a central stalk (subunits gamma, delta, and epsilon) rotating inside the F1 region and a stationary peripheral stalk (subunits F6, b, d, and OSCP) (PubMed:37244256). Component of a complex composed at least by ATPIF1, ATP5F1A, ATP5F1B, ATP5F1C AND ATP5F1E (By similarity).</text>
</comment>
<comment type="interaction">
    <interactant intactId="EBI-1049505">
        <id>P30049</id>
    </interactant>
    <interactant intactId="EBI-3904845">
        <id>P56381</id>
        <label>ATP5F1E</label>
    </interactant>
    <organismsDiffer>false</organismsDiffer>
    <experiments>5</experiments>
</comment>
<comment type="interaction">
    <interactant intactId="EBI-1049505">
        <id>P30049</id>
    </interactant>
    <interactant intactId="EBI-930964">
        <id>P54253</id>
        <label>ATXN1</label>
    </interactant>
    <organismsDiffer>false</organismsDiffer>
    <experiments>3</experiments>
</comment>
<comment type="interaction">
    <interactant intactId="EBI-1049505">
        <id>P30049</id>
    </interactant>
    <interactant intactId="EBI-10171774">
        <id>P60410</id>
        <label>KRTAP10-8</label>
    </interactant>
    <organismsDiffer>false</organismsDiffer>
    <experiments>3</experiments>
</comment>
<comment type="interaction">
    <interactant intactId="EBI-1049505">
        <id>P30049</id>
    </interactant>
    <interactant intactId="EBI-724076">
        <id>Q99750</id>
        <label>MDFI</label>
    </interactant>
    <organismsDiffer>false</organismsDiffer>
    <experiments>3</experiments>
</comment>
<comment type="interaction">
    <interactant intactId="EBI-1049505">
        <id>P30049</id>
    </interactant>
    <interactant intactId="EBI-22310682">
        <id>P0DPK4</id>
        <label>NOTCH2NLC</label>
    </interactant>
    <organismsDiffer>false</organismsDiffer>
    <experiments>3</experiments>
</comment>
<comment type="interaction">
    <interactant intactId="EBI-1049505">
        <id>P30049</id>
    </interactant>
    <interactant intactId="EBI-11975029">
        <id>Q05519-2</id>
        <label>SRSF11</label>
    </interactant>
    <organismsDiffer>false</organismsDiffer>
    <experiments>3</experiments>
</comment>
<comment type="interaction">
    <interactant intactId="EBI-1049505">
        <id>P30049</id>
    </interactant>
    <interactant intactId="EBI-949753">
        <id>Q63HR2</id>
        <label>TNS2</label>
    </interactant>
    <organismsDiffer>false</organismsDiffer>
    <experiments>3</experiments>
</comment>
<comment type="subcellular location">
    <subcellularLocation>
        <location>Mitochondrion</location>
    </subcellularLocation>
    <subcellularLocation>
        <location>Mitochondrion inner membrane</location>
    </subcellularLocation>
</comment>
<comment type="disease" evidence="5">
    <disease id="DI-05335">
        <name>Mitochondrial complex V deficiency, nuclear type 5</name>
        <acronym>MC5DN5</acronym>
        <description>A mitochondrial disorder characterized by childhood onset of episodic metabolic decompensation featuring lactic acidosis and hyperammonemia accompanied by ketoacidosis or hypoglycemia. Chronic manifestations include developmental delay, easy fatiguability, and 3-methylglutaconic aciduria. The transmission pattern of MC5DN5 is consistent with autosomal recessive inheritance.</description>
        <dbReference type="MIM" id="618120"/>
    </disease>
    <text>Disease susceptibility is associated with variants affecting the gene represented in this entry.</text>
</comment>
<comment type="similarity">
    <text evidence="8">Belongs to the ATPase epsilon chain family.</text>
</comment>
<feature type="transit peptide" description="Mitochondrion" evidence="4">
    <location>
        <begin position="1"/>
        <end position="22"/>
    </location>
</feature>
<feature type="chain" id="PRO_0000002661" description="ATP synthase F(1) complex subunit delta, mitochondrial">
    <location>
        <begin position="23"/>
        <end position="168"/>
    </location>
</feature>
<feature type="modified residue" description="N6-acetyllysine; alternate" evidence="3">
    <location>
        <position position="136"/>
    </location>
</feature>
<feature type="modified residue" description="N6-succinyllysine; alternate" evidence="3">
    <location>
        <position position="136"/>
    </location>
</feature>
<feature type="modified residue" description="N6-acetyllysine; alternate" evidence="3">
    <location>
        <position position="165"/>
    </location>
</feature>
<feature type="modified residue" description="N6-succinyllysine; alternate" evidence="3">
    <location>
        <position position="165"/>
    </location>
</feature>
<feature type="sequence variant" id="VAR_081452" description="In MC5DN5; no effect on protein abundance; decreased mitochondrial proton-transporting ATP synthase complex assembly; decreased aerobic respiration in patient cells homozygous for the mutation; partial loss of function confirmed by complementation assays; dbSNP:rs867410737." evidence="5">
    <original>P</original>
    <variation>L</variation>
    <location>
        <position position="82"/>
    </location>
</feature>
<feature type="sequence variant" id="VAR_081453" description="In MC5DN5; no effect on protein abundance; decreased mitochondrial proton-transporting ATP synthase complex assembly; decreased aerobic respiration in patient cells homozygous for the mutation; partial loss of function confirmed by complementation assays; dbSNP:rs1555745989." evidence="5">
    <original>V</original>
    <variation>G</variation>
    <location>
        <position position="106"/>
    </location>
</feature>
<feature type="strand" evidence="20">
    <location>
        <begin position="39"/>
        <end position="43"/>
    </location>
</feature>
<feature type="strand" evidence="21">
    <location>
        <begin position="47"/>
        <end position="49"/>
    </location>
</feature>
<feature type="strand" evidence="20">
    <location>
        <begin position="51"/>
        <end position="62"/>
    </location>
</feature>
<feature type="strand" evidence="20">
    <location>
        <begin position="65"/>
        <end position="69"/>
    </location>
</feature>
<feature type="strand" evidence="20">
    <location>
        <begin position="76"/>
        <end position="80"/>
    </location>
</feature>
<feature type="strand" evidence="20">
    <location>
        <begin position="82"/>
        <end position="89"/>
    </location>
</feature>
<feature type="strand" evidence="20">
    <location>
        <begin position="94"/>
        <end position="99"/>
    </location>
</feature>
<feature type="strand" evidence="20">
    <location>
        <begin position="101"/>
        <end position="106"/>
    </location>
</feature>
<feature type="strand" evidence="20">
    <location>
        <begin position="110"/>
        <end position="121"/>
    </location>
</feature>
<feature type="helix" evidence="20">
    <location>
        <begin position="122"/>
        <end position="124"/>
    </location>
</feature>
<feature type="helix" evidence="20">
    <location>
        <begin position="127"/>
        <end position="143"/>
    </location>
</feature>
<feature type="helix" evidence="20">
    <location>
        <begin position="147"/>
        <end position="167"/>
    </location>
</feature>
<proteinExistence type="evidence at protein level"/>
<reference key="1">
    <citation type="journal article" date="1992" name="Biochim. Biophys. Acta">
        <title>Molecular cloning of an import precursor of the delta-subunit of the human mitochondrial ATP synthase complex.</title>
        <authorList>
            <person name="Jordan E.M."/>
            <person name="Breen G.A.M."/>
        </authorList>
    </citation>
    <scope>NUCLEOTIDE SEQUENCE [MRNA]</scope>
</reference>
<reference key="2">
    <citation type="submission" date="2004-06" db="EMBL/GenBank/DDBJ databases">
        <title>Cloning of human full open reading frames in Gateway(TM) system entry vector (pDONR201).</title>
        <authorList>
            <person name="Halleck A."/>
            <person name="Ebert L."/>
            <person name="Mkoundinya M."/>
            <person name="Schick M."/>
            <person name="Eisenstein S."/>
            <person name="Neubert P."/>
            <person name="Kstrang K."/>
            <person name="Schatten R."/>
            <person name="Shen B."/>
            <person name="Henze S."/>
            <person name="Mar W."/>
            <person name="Korn B."/>
            <person name="Zuo D."/>
            <person name="Hu Y."/>
            <person name="LaBaer J."/>
        </authorList>
    </citation>
    <scope>NUCLEOTIDE SEQUENCE [LARGE SCALE MRNA]</scope>
</reference>
<reference key="3">
    <citation type="journal article" date="2004" name="Nature">
        <title>The DNA sequence and biology of human chromosome 19.</title>
        <authorList>
            <person name="Grimwood J."/>
            <person name="Gordon L.A."/>
            <person name="Olsen A.S."/>
            <person name="Terry A."/>
            <person name="Schmutz J."/>
            <person name="Lamerdin J.E."/>
            <person name="Hellsten U."/>
            <person name="Goodstein D."/>
            <person name="Couronne O."/>
            <person name="Tran-Gyamfi M."/>
            <person name="Aerts A."/>
            <person name="Altherr M."/>
            <person name="Ashworth L."/>
            <person name="Bajorek E."/>
            <person name="Black S."/>
            <person name="Branscomb E."/>
            <person name="Caenepeel S."/>
            <person name="Carrano A.V."/>
            <person name="Caoile C."/>
            <person name="Chan Y.M."/>
            <person name="Christensen M."/>
            <person name="Cleland C.A."/>
            <person name="Copeland A."/>
            <person name="Dalin E."/>
            <person name="Dehal P."/>
            <person name="Denys M."/>
            <person name="Detter J.C."/>
            <person name="Escobar J."/>
            <person name="Flowers D."/>
            <person name="Fotopulos D."/>
            <person name="Garcia C."/>
            <person name="Georgescu A.M."/>
            <person name="Glavina T."/>
            <person name="Gomez M."/>
            <person name="Gonzales E."/>
            <person name="Groza M."/>
            <person name="Hammon N."/>
            <person name="Hawkins T."/>
            <person name="Haydu L."/>
            <person name="Ho I."/>
            <person name="Huang W."/>
            <person name="Israni S."/>
            <person name="Jett J."/>
            <person name="Kadner K."/>
            <person name="Kimball H."/>
            <person name="Kobayashi A."/>
            <person name="Larionov V."/>
            <person name="Leem S.-H."/>
            <person name="Lopez F."/>
            <person name="Lou Y."/>
            <person name="Lowry S."/>
            <person name="Malfatti S."/>
            <person name="Martinez D."/>
            <person name="McCready P.M."/>
            <person name="Medina C."/>
            <person name="Morgan J."/>
            <person name="Nelson K."/>
            <person name="Nolan M."/>
            <person name="Ovcharenko I."/>
            <person name="Pitluck S."/>
            <person name="Pollard M."/>
            <person name="Popkie A.P."/>
            <person name="Predki P."/>
            <person name="Quan G."/>
            <person name="Ramirez L."/>
            <person name="Rash S."/>
            <person name="Retterer J."/>
            <person name="Rodriguez A."/>
            <person name="Rogers S."/>
            <person name="Salamov A."/>
            <person name="Salazar A."/>
            <person name="She X."/>
            <person name="Smith D."/>
            <person name="Slezak T."/>
            <person name="Solovyev V."/>
            <person name="Thayer N."/>
            <person name="Tice H."/>
            <person name="Tsai M."/>
            <person name="Ustaszewska A."/>
            <person name="Vo N."/>
            <person name="Wagner M."/>
            <person name="Wheeler J."/>
            <person name="Wu K."/>
            <person name="Xie G."/>
            <person name="Yang J."/>
            <person name="Dubchak I."/>
            <person name="Furey T.S."/>
            <person name="DeJong P."/>
            <person name="Dickson M."/>
            <person name="Gordon D."/>
            <person name="Eichler E.E."/>
            <person name="Pennacchio L.A."/>
            <person name="Richardson P."/>
            <person name="Stubbs L."/>
            <person name="Rokhsar D.S."/>
            <person name="Myers R.M."/>
            <person name="Rubin E.M."/>
            <person name="Lucas S.M."/>
        </authorList>
    </citation>
    <scope>NUCLEOTIDE SEQUENCE [LARGE SCALE GENOMIC DNA]</scope>
</reference>
<reference key="4">
    <citation type="submission" date="2005-09" db="EMBL/GenBank/DDBJ databases">
        <authorList>
            <person name="Mural R.J."/>
            <person name="Istrail S."/>
            <person name="Sutton G.G."/>
            <person name="Florea L."/>
            <person name="Halpern A.L."/>
            <person name="Mobarry C.M."/>
            <person name="Lippert R."/>
            <person name="Walenz B."/>
            <person name="Shatkay H."/>
            <person name="Dew I."/>
            <person name="Miller J.R."/>
            <person name="Flanigan M.J."/>
            <person name="Edwards N.J."/>
            <person name="Bolanos R."/>
            <person name="Fasulo D."/>
            <person name="Halldorsson B.V."/>
            <person name="Hannenhalli S."/>
            <person name="Turner R."/>
            <person name="Yooseph S."/>
            <person name="Lu F."/>
            <person name="Nusskern D.R."/>
            <person name="Shue B.C."/>
            <person name="Zheng X.H."/>
            <person name="Zhong F."/>
            <person name="Delcher A.L."/>
            <person name="Huson D.H."/>
            <person name="Kravitz S.A."/>
            <person name="Mouchard L."/>
            <person name="Reinert K."/>
            <person name="Remington K.A."/>
            <person name="Clark A.G."/>
            <person name="Waterman M.S."/>
            <person name="Eichler E.E."/>
            <person name="Adams M.D."/>
            <person name="Hunkapiller M.W."/>
            <person name="Myers E.W."/>
            <person name="Venter J.C."/>
        </authorList>
    </citation>
    <scope>NUCLEOTIDE SEQUENCE [LARGE SCALE GENOMIC DNA]</scope>
</reference>
<reference key="5">
    <citation type="journal article" date="2004" name="Genome Res.">
        <title>The status, quality, and expansion of the NIH full-length cDNA project: the Mammalian Gene Collection (MGC).</title>
        <authorList>
            <consortium name="The MGC Project Team"/>
        </authorList>
    </citation>
    <scope>NUCLEOTIDE SEQUENCE [LARGE SCALE MRNA]</scope>
    <source>
        <tissue>Brain</tissue>
        <tissue>Lung</tissue>
    </source>
</reference>
<reference key="6">
    <citation type="journal article" date="1992" name="Electrophoresis">
        <title>Human liver protein map: a reference database established by microsequencing and gel comparison.</title>
        <authorList>
            <person name="Hochstrasser D.F."/>
            <person name="Frutiger S."/>
            <person name="Paquet N."/>
            <person name="Bairoch A."/>
            <person name="Ravier F."/>
            <person name="Pasquali C."/>
            <person name="Sanchez J.-C."/>
            <person name="Tissot J.-D."/>
            <person name="Bjellqvist B."/>
            <person name="Vargas R."/>
            <person name="Appel R.D."/>
            <person name="Hughes G.J."/>
        </authorList>
    </citation>
    <scope>PROTEIN SEQUENCE OF 23-38</scope>
    <source>
        <tissue>Liver</tissue>
    </source>
</reference>
<reference key="7">
    <citation type="journal article" date="2011" name="BMC Syst. Biol.">
        <title>Initial characterization of the human central proteome.</title>
        <authorList>
            <person name="Burkard T.R."/>
            <person name="Planyavsky M."/>
            <person name="Kaupe I."/>
            <person name="Breitwieser F.P."/>
            <person name="Buerckstuemmer T."/>
            <person name="Bennett K.L."/>
            <person name="Superti-Furga G."/>
            <person name="Colinge J."/>
        </authorList>
    </citation>
    <scope>IDENTIFICATION BY MASS SPECTROMETRY [LARGE SCALE ANALYSIS]</scope>
</reference>
<reference key="8">
    <citation type="journal article" date="2014" name="J. Proteomics">
        <title>An enzyme assisted RP-RPLC approach for in-depth analysis of human liver phosphoproteome.</title>
        <authorList>
            <person name="Bian Y."/>
            <person name="Song C."/>
            <person name="Cheng K."/>
            <person name="Dong M."/>
            <person name="Wang F."/>
            <person name="Huang J."/>
            <person name="Sun D."/>
            <person name="Wang L."/>
            <person name="Ye M."/>
            <person name="Zou H."/>
        </authorList>
    </citation>
    <scope>IDENTIFICATION BY MASS SPECTROMETRY [LARGE SCALE ANALYSIS]</scope>
    <source>
        <tissue>Liver</tissue>
    </source>
</reference>
<reference key="9">
    <citation type="journal article" date="2015" name="Proteomics">
        <title>N-terminome analysis of the human mitochondrial proteome.</title>
        <authorList>
            <person name="Vaca Jacome A.S."/>
            <person name="Rabilloud T."/>
            <person name="Schaeffer-Reiss C."/>
            <person name="Rompais M."/>
            <person name="Ayoub D."/>
            <person name="Lane L."/>
            <person name="Bairoch A."/>
            <person name="Van Dorsselaer A."/>
            <person name="Carapito C."/>
        </authorList>
    </citation>
    <scope>IDENTIFICATION BY MASS SPECTROMETRY [LARGE SCALE ANALYSIS]</scope>
</reference>
<reference key="10">
    <citation type="journal article" date="2018" name="Am. J. Hum. Genet.">
        <title>Biallelic Mutations in ATP5F1D, which Encodes a Subunit of ATP Synthase, Cause a Metabolic Disorder.</title>
        <authorList>
            <consortium name="Undiagnosed Diseases Network"/>
            <person name="Olahova M."/>
            <person name="Yoon W.H."/>
            <person name="Thompson K."/>
            <person name="Jangam S."/>
            <person name="Fernandez L."/>
            <person name="Davidson J.M."/>
            <person name="Kyle J.E."/>
            <person name="Grove M.E."/>
            <person name="Fisk D.G."/>
            <person name="Kohler J.N."/>
            <person name="Holmes M."/>
            <person name="Dries A.M."/>
            <person name="Huang Y."/>
            <person name="Zhao C."/>
            <person name="Contrepois K."/>
            <person name="Zappala Z."/>
            <person name="Fresard L."/>
            <person name="Waggott D."/>
            <person name="Zink E.M."/>
            <person name="Kim Y.M."/>
            <person name="Heyman H.M."/>
            <person name="Stratton K.G."/>
            <person name="Webb-Robertson B.M."/>
            <person name="Snyder M."/>
            <person name="Merker J.D."/>
            <person name="Montgomery S.B."/>
            <person name="Fisher P.G."/>
            <person name="Feichtinger R.G."/>
            <person name="Mayr J.A."/>
            <person name="Hall J."/>
            <person name="Barbosa I.A."/>
            <person name="Simpson M.A."/>
            <person name="Deshpande C."/>
            <person name="Waters K.M."/>
            <person name="Koeller D.M."/>
            <person name="Metz T.O."/>
            <person name="Morris A.A."/>
            <person name="Schelley S."/>
            <person name="Cowan T."/>
            <person name="Friederich M.W."/>
            <person name="McFarland R."/>
            <person name="Van Hove J.L.K."/>
            <person name="Enns G.M."/>
            <person name="Yamamoto S."/>
            <person name="Ashley E.A."/>
            <person name="Wangler M.F."/>
            <person name="Taylor R.W."/>
            <person name="Bellen H.J."/>
            <person name="Bernstein J.A."/>
            <person name="Wheeler M.T."/>
        </authorList>
    </citation>
    <scope>FUNCTION</scope>
    <scope>INVOLVEMENT IN MC5DN5</scope>
    <scope>VARIANTS MC5DN5 LEU-82 AND GLY-106</scope>
    <scope>CHARACTERIZATION OF VARIANTS MC5DN5 LEU-82 AND GLY-106</scope>
</reference>
<reference key="11">
    <citation type="journal article" date="2018" name="Biochim. Biophys. Acta">
        <title>Role of the mitochondrial ATP synthase central stalk subunits gamma and delta in the activity and assembly of the mammalian enzyme.</title>
        <authorList>
            <person name="Pecina P."/>
            <person name="Nuskova H."/>
            <person name="Karbanova V."/>
            <person name="Kaplanova V."/>
            <person name="Mracek T."/>
            <person name="Houstek J."/>
        </authorList>
    </citation>
    <scope>FUNCTION</scope>
</reference>
<reference evidence="12 13 14 15 16 17 18 19" key="12">
    <citation type="journal article" date="2023" name="Mol. Cell">
        <title>Structure of the human ATP synthase.</title>
        <authorList>
            <person name="Lai Y."/>
            <person name="Zhang Y."/>
            <person name="Zhou S."/>
            <person name="Xu J."/>
            <person name="Du Z."/>
            <person name="Feng Z."/>
            <person name="Yu L."/>
            <person name="Zhao Z."/>
            <person name="Wang W."/>
            <person name="Tang Y."/>
            <person name="Yang X."/>
            <person name="Guddat L.W."/>
            <person name="Liu F."/>
            <person name="Gao Y."/>
            <person name="Rao Z."/>
            <person name="Gong H."/>
        </authorList>
    </citation>
    <scope>STRUCTURE BY ELECTRON MICROSCOPY (2.53 ANGSTROMS) OF 23-168</scope>
    <scope>IDENTIFICATION IN THE ATP SYNTHASE COMPLEX</scope>
    <scope>FUNCTION</scope>
    <scope>SUBUNIT</scope>
</reference>
<name>ATPD_HUMAN</name>
<accession>P30049</accession>
<accession>D6W5Y3</accession>
<accession>Q6FG90</accession>